<evidence type="ECO:0000250" key="1"/>
<evidence type="ECO:0000250" key="2">
    <source>
        <dbReference type="UniProtKB" id="Q9HFE4"/>
    </source>
</evidence>
<evidence type="ECO:0000269" key="3">
    <source>
    </source>
</evidence>
<evidence type="ECO:0000305" key="4"/>
<feature type="chain" id="PRO_0000147670" description="Thiol-specific monooxygenase">
    <location>
        <begin position="1"/>
        <end position="432"/>
    </location>
</feature>
<feature type="binding site" evidence="2">
    <location>
        <begin position="13"/>
        <end position="17"/>
    </location>
    <ligand>
        <name>FAD</name>
        <dbReference type="ChEBI" id="CHEBI:57692"/>
    </ligand>
</feature>
<feature type="binding site" evidence="2">
    <location>
        <begin position="46"/>
        <end position="47"/>
    </location>
    <ligand>
        <name>FAD</name>
        <dbReference type="ChEBI" id="CHEBI:57692"/>
    </ligand>
</feature>
<feature type="binding site" evidence="2">
    <location>
        <begin position="65"/>
        <end position="66"/>
    </location>
    <ligand>
        <name>NADP(+)</name>
        <dbReference type="ChEBI" id="CHEBI:58349"/>
    </ligand>
</feature>
<feature type="binding site" evidence="2">
    <location>
        <begin position="117"/>
        <end position="118"/>
    </location>
    <ligand>
        <name>FAD</name>
        <dbReference type="ChEBI" id="CHEBI:57692"/>
    </ligand>
</feature>
<feature type="binding site" evidence="2">
    <location>
        <begin position="199"/>
        <end position="202"/>
    </location>
    <ligand>
        <name>NADP(+)</name>
        <dbReference type="ChEBI" id="CHEBI:58349"/>
    </ligand>
</feature>
<protein>
    <recommendedName>
        <fullName>Thiol-specific monooxygenase</fullName>
        <ecNumber>1.14.13.-</ecNumber>
    </recommendedName>
    <alternativeName>
        <fullName>Flavin-dependent monooxygenase</fullName>
    </alternativeName>
</protein>
<dbReference type="EC" id="1.14.13.-"/>
<dbReference type="EMBL" id="AY357258">
    <property type="protein sequence ID" value="AAQ62539.1"/>
    <property type="molecule type" value="Genomic_DNA"/>
</dbReference>
<dbReference type="EMBL" id="U00027">
    <property type="protein sequence ID" value="AAB68021.2"/>
    <property type="molecule type" value="Genomic_DNA"/>
</dbReference>
<dbReference type="EMBL" id="BK006934">
    <property type="protein sequence ID" value="DAA06869.1"/>
    <property type="molecule type" value="Genomic_DNA"/>
</dbReference>
<dbReference type="PIR" id="S48915">
    <property type="entry name" value="S48915"/>
</dbReference>
<dbReference type="RefSeq" id="NP_012046.4">
    <property type="nucleotide sequence ID" value="NM_001179307.3"/>
</dbReference>
<dbReference type="SMR" id="P38866"/>
<dbReference type="BioGRID" id="36609">
    <property type="interactions" value="51"/>
</dbReference>
<dbReference type="FunCoup" id="P38866">
    <property type="interactions" value="826"/>
</dbReference>
<dbReference type="IntAct" id="P38866">
    <property type="interactions" value="1"/>
</dbReference>
<dbReference type="STRING" id="4932.YHR176W"/>
<dbReference type="iPTMnet" id="P38866"/>
<dbReference type="PaxDb" id="4932-YHR176W"/>
<dbReference type="PeptideAtlas" id="P38866"/>
<dbReference type="EnsemblFungi" id="YHR176W_mRNA">
    <property type="protein sequence ID" value="YHR176W"/>
    <property type="gene ID" value="YHR176W"/>
</dbReference>
<dbReference type="GeneID" id="856581"/>
<dbReference type="KEGG" id="sce:YHR176W"/>
<dbReference type="AGR" id="SGD:S000001219"/>
<dbReference type="SGD" id="S000001219">
    <property type="gene designation" value="FMO1"/>
</dbReference>
<dbReference type="VEuPathDB" id="FungiDB:YHR176W"/>
<dbReference type="eggNOG" id="KOG1399">
    <property type="taxonomic scope" value="Eukaryota"/>
</dbReference>
<dbReference type="HOGENOM" id="CLU_006909_5_0_1"/>
<dbReference type="InParanoid" id="P38866"/>
<dbReference type="OMA" id="MVTPLWK"/>
<dbReference type="OrthoDB" id="66881at2759"/>
<dbReference type="BioCyc" id="YEAST:G3O-31209-MONOMER"/>
<dbReference type="BioGRID-ORCS" id="856581">
    <property type="hits" value="0 hits in 10 CRISPR screens"/>
</dbReference>
<dbReference type="PRO" id="PR:P38866"/>
<dbReference type="Proteomes" id="UP000002311">
    <property type="component" value="Chromosome VIII"/>
</dbReference>
<dbReference type="RNAct" id="P38866">
    <property type="molecule type" value="protein"/>
</dbReference>
<dbReference type="GO" id="GO:0005829">
    <property type="term" value="C:cytosol"/>
    <property type="evidence" value="ECO:0007005"/>
    <property type="project" value="SGD"/>
</dbReference>
<dbReference type="GO" id="GO:0005789">
    <property type="term" value="C:endoplasmic reticulum membrane"/>
    <property type="evidence" value="ECO:0000314"/>
    <property type="project" value="SGD"/>
</dbReference>
<dbReference type="GO" id="GO:0050660">
    <property type="term" value="F:flavin adenine dinucleotide binding"/>
    <property type="evidence" value="ECO:0000318"/>
    <property type="project" value="GO_Central"/>
</dbReference>
<dbReference type="GO" id="GO:0004497">
    <property type="term" value="F:monooxygenase activity"/>
    <property type="evidence" value="ECO:0000318"/>
    <property type="project" value="GO_Central"/>
</dbReference>
<dbReference type="GO" id="GO:0004499">
    <property type="term" value="F:N,N-dimethylaniline monooxygenase activity"/>
    <property type="evidence" value="ECO:0000314"/>
    <property type="project" value="SGD"/>
</dbReference>
<dbReference type="GO" id="GO:0050661">
    <property type="term" value="F:NADP binding"/>
    <property type="evidence" value="ECO:0007669"/>
    <property type="project" value="InterPro"/>
</dbReference>
<dbReference type="GO" id="GO:0006457">
    <property type="term" value="P:protein folding"/>
    <property type="evidence" value="ECO:0000314"/>
    <property type="project" value="SGD"/>
</dbReference>
<dbReference type="Gene3D" id="3.50.50.60">
    <property type="entry name" value="FAD/NAD(P)-binding domain"/>
    <property type="match status" value="2"/>
</dbReference>
<dbReference type="InterPro" id="IPR036188">
    <property type="entry name" value="FAD/NAD-bd_sf"/>
</dbReference>
<dbReference type="InterPro" id="IPR000960">
    <property type="entry name" value="Flavin_mOase"/>
</dbReference>
<dbReference type="InterPro" id="IPR020946">
    <property type="entry name" value="Flavin_mOase-like"/>
</dbReference>
<dbReference type="InterPro" id="IPR050346">
    <property type="entry name" value="FMO-like"/>
</dbReference>
<dbReference type="PANTHER" id="PTHR23023">
    <property type="entry name" value="DIMETHYLANILINE MONOOXYGENASE"/>
    <property type="match status" value="1"/>
</dbReference>
<dbReference type="Pfam" id="PF00743">
    <property type="entry name" value="FMO-like"/>
    <property type="match status" value="2"/>
</dbReference>
<dbReference type="PRINTS" id="PR00370">
    <property type="entry name" value="FMOXYGENASE"/>
</dbReference>
<dbReference type="SUPFAM" id="SSF51905">
    <property type="entry name" value="FAD/NAD(P)-binding domain"/>
    <property type="match status" value="2"/>
</dbReference>
<organism>
    <name type="scientific">Saccharomyces cerevisiae (strain ATCC 204508 / S288c)</name>
    <name type="common">Baker's yeast</name>
    <dbReference type="NCBI Taxonomy" id="559292"/>
    <lineage>
        <taxon>Eukaryota</taxon>
        <taxon>Fungi</taxon>
        <taxon>Dikarya</taxon>
        <taxon>Ascomycota</taxon>
        <taxon>Saccharomycotina</taxon>
        <taxon>Saccharomycetes</taxon>
        <taxon>Saccharomycetales</taxon>
        <taxon>Saccharomycetaceae</taxon>
        <taxon>Saccharomyces</taxon>
    </lineage>
</organism>
<keyword id="KW-0274">FAD</keyword>
<keyword id="KW-0285">Flavoprotein</keyword>
<keyword id="KW-0503">Monooxygenase</keyword>
<keyword id="KW-0521">NADP</keyword>
<keyword id="KW-0560">Oxidoreductase</keyword>
<keyword id="KW-1185">Reference proteome</keyword>
<reference key="1">
    <citation type="journal article" date="2002" name="Arch. Biochem. Biophys.">
        <title>Molecular cloning and characterization of a full-length flavin-dependent monooxygenase from yeast.</title>
        <authorList>
            <person name="Zhang M."/>
            <person name="Robertus J.D."/>
        </authorList>
    </citation>
    <scope>NUCLEOTIDE SEQUENCE [GENOMIC DNA]</scope>
    <scope>FUNCTION</scope>
    <scope>SUBUNIT</scope>
    <source>
        <strain>ATCC 26109 / X2180</strain>
    </source>
</reference>
<reference key="2">
    <citation type="journal article" date="1994" name="Science">
        <title>Complete nucleotide sequence of Saccharomyces cerevisiae chromosome VIII.</title>
        <authorList>
            <person name="Johnston M."/>
            <person name="Andrews S."/>
            <person name="Brinkman R."/>
            <person name="Cooper J."/>
            <person name="Ding H."/>
            <person name="Dover J."/>
            <person name="Du Z."/>
            <person name="Favello A."/>
            <person name="Fulton L."/>
            <person name="Gattung S."/>
            <person name="Geisel C."/>
            <person name="Kirsten J."/>
            <person name="Kucaba T."/>
            <person name="Hillier L.W."/>
            <person name="Jier M."/>
            <person name="Johnston L."/>
            <person name="Langston Y."/>
            <person name="Latreille P."/>
            <person name="Louis E.J."/>
            <person name="Macri C."/>
            <person name="Mardis E."/>
            <person name="Menezes S."/>
            <person name="Mouser L."/>
            <person name="Nhan M."/>
            <person name="Rifkin L."/>
            <person name="Riles L."/>
            <person name="St Peter H."/>
            <person name="Trevaskis E."/>
            <person name="Vaughan K."/>
            <person name="Vignati D."/>
            <person name="Wilcox L."/>
            <person name="Wohldman P."/>
            <person name="Waterston R."/>
            <person name="Wilson R."/>
            <person name="Vaudin M."/>
        </authorList>
    </citation>
    <scope>NUCLEOTIDE SEQUENCE [LARGE SCALE GENOMIC DNA]</scope>
    <source>
        <strain>ATCC 204508 / S288c</strain>
    </source>
</reference>
<reference key="3">
    <citation type="submission" date="2004-02" db="EMBL/GenBank/DDBJ databases">
        <authorList>
            <person name="Fisk D."/>
            <person name="Cherry J.M."/>
        </authorList>
    </citation>
    <scope>SEQUENCE REVISION TO C-TERMINUS</scope>
</reference>
<reference key="4">
    <citation type="journal article" date="2014" name="G3 (Bethesda)">
        <title>The reference genome sequence of Saccharomyces cerevisiae: Then and now.</title>
        <authorList>
            <person name="Engel S.R."/>
            <person name="Dietrich F.S."/>
            <person name="Fisk D.G."/>
            <person name="Binkley G."/>
            <person name="Balakrishnan R."/>
            <person name="Costanzo M.C."/>
            <person name="Dwight S.S."/>
            <person name="Hitz B.C."/>
            <person name="Karra K."/>
            <person name="Nash R.S."/>
            <person name="Weng S."/>
            <person name="Wong E.D."/>
            <person name="Lloyd P."/>
            <person name="Skrzypek M.S."/>
            <person name="Miyasato S.R."/>
            <person name="Simison M."/>
            <person name="Cherry J.M."/>
        </authorList>
    </citation>
    <scope>GENOME REANNOTATION</scope>
    <source>
        <strain>ATCC 204508 / S288c</strain>
    </source>
</reference>
<reference key="5">
    <citation type="journal article" date="2012" name="Proc. Natl. Acad. Sci. U.S.A.">
        <title>N-terminal acetylome analyses and functional insights of the N-terminal acetyltransferase NatB.</title>
        <authorList>
            <person name="Van Damme P."/>
            <person name="Lasa M."/>
            <person name="Polevoda B."/>
            <person name="Gazquez C."/>
            <person name="Elosegui-Artola A."/>
            <person name="Kim D.S."/>
            <person name="De Juan-Pardo E."/>
            <person name="Demeyer K."/>
            <person name="Hole K."/>
            <person name="Larrea E."/>
            <person name="Timmerman E."/>
            <person name="Prieto J."/>
            <person name="Arnesen T."/>
            <person name="Sherman F."/>
            <person name="Gevaert K."/>
            <person name="Aldabe R."/>
        </authorList>
    </citation>
    <scope>IDENTIFICATION BY MASS SPECTROMETRY [LARGE SCALE ANALYSIS]</scope>
</reference>
<comment type="function">
    <text evidence="3">Flavin-dependent oxidation of thiol-containing compounds. Probably required for the correct folding of disulfide-bonded proteins.</text>
</comment>
<comment type="cofactor">
    <cofactor evidence="1">
        <name>FAD</name>
        <dbReference type="ChEBI" id="CHEBI:57692"/>
    </cofactor>
</comment>
<comment type="subunit">
    <text evidence="3">Monomer.</text>
</comment>
<comment type="similarity">
    <text evidence="4">Belongs to the FMO family.</text>
</comment>
<sequence length="432" mass="49099">MTVNDKKRLAIIGGGPGGLAAARVFSQSLPNFEIEIFVKDYDIGGVWHYPEQKSDGRVMYDHLETNISKKLMQFSGFPFEENVPLYPSRRNIWEYLKAYYKTFIANKDAISIHFSTEVTYLKKKNSQWEITSKDELRTTKSDFDFVIVASGHYSVPKLPTNIAGLDLWFDNKGAFHSKDFKNCEFAREKVVIVVGNGSSGQDIANQLTTVAKKVYNSIKEPASNQLKAKLIETVQTIDSADWKNRSVTLSDGRVLQNIDYIIFATGYYYSFPFIEPSVRLEVLGEGVTGDKHSSVNLHNLWEHMIYVKDPTLSFILTPQLVIPFPLSELQAAIMVEVFCKSLPITTTFDSNACGTHNFPKGKDLEYYAELQELLNSIPRRVGHFEPVVWDDRLIDLRNSSYTDKEERNVLLAEHAQALKKKKAPYFLPAPHT</sequence>
<proteinExistence type="evidence at protein level"/>
<gene>
    <name type="primary">FMO1</name>
    <name type="ordered locus">YHR176W</name>
</gene>
<accession>P38866</accession>
<accession>D3DLC5</accession>
<accession>Q6UZ93</accession>
<name>FMO1_YEAST</name>